<gene>
    <name evidence="1" type="primary">kdsB</name>
    <name type="ordered locus">BPP2561</name>
</gene>
<organism>
    <name type="scientific">Bordetella parapertussis (strain 12822 / ATCC BAA-587 / NCTC 13253)</name>
    <dbReference type="NCBI Taxonomy" id="257311"/>
    <lineage>
        <taxon>Bacteria</taxon>
        <taxon>Pseudomonadati</taxon>
        <taxon>Pseudomonadota</taxon>
        <taxon>Betaproteobacteria</taxon>
        <taxon>Burkholderiales</taxon>
        <taxon>Alcaligenaceae</taxon>
        <taxon>Bordetella</taxon>
    </lineage>
</organism>
<evidence type="ECO:0000255" key="1">
    <source>
        <dbReference type="HAMAP-Rule" id="MF_00057"/>
    </source>
</evidence>
<protein>
    <recommendedName>
        <fullName evidence="1">3-deoxy-manno-octulosonate cytidylyltransferase</fullName>
        <ecNumber evidence="1">2.7.7.38</ecNumber>
    </recommendedName>
    <alternativeName>
        <fullName evidence="1">CMP-2-keto-3-deoxyoctulosonic acid synthase</fullName>
        <shortName evidence="1">CKS</shortName>
        <shortName evidence="1">CMP-KDO synthase</shortName>
    </alternativeName>
</protein>
<keyword id="KW-0963">Cytoplasm</keyword>
<keyword id="KW-0448">Lipopolysaccharide biosynthesis</keyword>
<keyword id="KW-0548">Nucleotidyltransferase</keyword>
<keyword id="KW-0808">Transferase</keyword>
<comment type="function">
    <text evidence="1">Activates KDO (a required 8-carbon sugar) for incorporation into bacterial lipopolysaccharide in Gram-negative bacteria.</text>
</comment>
<comment type="catalytic activity">
    <reaction evidence="1">
        <text>3-deoxy-alpha-D-manno-oct-2-ulosonate + CTP = CMP-3-deoxy-beta-D-manno-octulosonate + diphosphate</text>
        <dbReference type="Rhea" id="RHEA:23448"/>
        <dbReference type="ChEBI" id="CHEBI:33019"/>
        <dbReference type="ChEBI" id="CHEBI:37563"/>
        <dbReference type="ChEBI" id="CHEBI:85986"/>
        <dbReference type="ChEBI" id="CHEBI:85987"/>
        <dbReference type="EC" id="2.7.7.38"/>
    </reaction>
</comment>
<comment type="pathway">
    <text evidence="1">Nucleotide-sugar biosynthesis; CMP-3-deoxy-D-manno-octulosonate biosynthesis; CMP-3-deoxy-D-manno-octulosonate from 3-deoxy-D-manno-octulosonate and CTP: step 1/1.</text>
</comment>
<comment type="pathway">
    <text evidence="1">Bacterial outer membrane biogenesis; lipopolysaccharide biosynthesis.</text>
</comment>
<comment type="subcellular location">
    <subcellularLocation>
        <location evidence="1">Cytoplasm</location>
    </subcellularLocation>
</comment>
<comment type="similarity">
    <text evidence="1">Belongs to the KdsB family.</text>
</comment>
<name>KDSB_BORPA</name>
<accession>Q7W7F9</accession>
<sequence>MSFTVLIPARLASTRLPDKPLADIAGKPMVVRVAERAALSGAERVMIATDDARVQQAAADHGHAAILTRPDHPTGTDRLSEAVDALGLPDDAIVVNVQGDEPLIEPALIDAVAAQLVAAPHADIATCACPLADAEALFNPNVVKVVCAADRRALYFSRAPIPWARDALAGGARVLAPGLPAWHHIGIYAYRVAFLRRFPALSQGQLERYESLEQLRAMEHGHVIVVHHTDSAPAAGVDTPADLERARAAYTNRL</sequence>
<proteinExistence type="inferred from homology"/>
<dbReference type="EC" id="2.7.7.38" evidence="1"/>
<dbReference type="EMBL" id="BX640430">
    <property type="protein sequence ID" value="CAE37855.1"/>
    <property type="molecule type" value="Genomic_DNA"/>
</dbReference>
<dbReference type="RefSeq" id="WP_004567493.1">
    <property type="nucleotide sequence ID" value="NC_002928.3"/>
</dbReference>
<dbReference type="SMR" id="Q7W7F9"/>
<dbReference type="GeneID" id="93204348"/>
<dbReference type="KEGG" id="bpa:BPP2561"/>
<dbReference type="HOGENOM" id="CLU_065038_1_0_4"/>
<dbReference type="UniPathway" id="UPA00030"/>
<dbReference type="UniPathway" id="UPA00358">
    <property type="reaction ID" value="UER00476"/>
</dbReference>
<dbReference type="Proteomes" id="UP000001421">
    <property type="component" value="Chromosome"/>
</dbReference>
<dbReference type="GO" id="GO:0005829">
    <property type="term" value="C:cytosol"/>
    <property type="evidence" value="ECO:0007669"/>
    <property type="project" value="TreeGrafter"/>
</dbReference>
<dbReference type="GO" id="GO:0008690">
    <property type="term" value="F:3-deoxy-manno-octulosonate cytidylyltransferase activity"/>
    <property type="evidence" value="ECO:0007669"/>
    <property type="project" value="UniProtKB-UniRule"/>
</dbReference>
<dbReference type="GO" id="GO:0033468">
    <property type="term" value="P:CMP-keto-3-deoxy-D-manno-octulosonic acid biosynthetic process"/>
    <property type="evidence" value="ECO:0007669"/>
    <property type="project" value="UniProtKB-UniRule"/>
</dbReference>
<dbReference type="GO" id="GO:0009103">
    <property type="term" value="P:lipopolysaccharide biosynthetic process"/>
    <property type="evidence" value="ECO:0007669"/>
    <property type="project" value="UniProtKB-UniRule"/>
</dbReference>
<dbReference type="CDD" id="cd02517">
    <property type="entry name" value="CMP-KDO-Synthetase"/>
    <property type="match status" value="1"/>
</dbReference>
<dbReference type="FunFam" id="3.90.550.10:FF:000011">
    <property type="entry name" value="3-deoxy-manno-octulosonate cytidylyltransferase"/>
    <property type="match status" value="1"/>
</dbReference>
<dbReference type="Gene3D" id="3.90.550.10">
    <property type="entry name" value="Spore Coat Polysaccharide Biosynthesis Protein SpsA, Chain A"/>
    <property type="match status" value="1"/>
</dbReference>
<dbReference type="HAMAP" id="MF_00057">
    <property type="entry name" value="KdsB"/>
    <property type="match status" value="1"/>
</dbReference>
<dbReference type="InterPro" id="IPR003329">
    <property type="entry name" value="Cytidylyl_trans"/>
</dbReference>
<dbReference type="InterPro" id="IPR004528">
    <property type="entry name" value="KdsB"/>
</dbReference>
<dbReference type="InterPro" id="IPR029044">
    <property type="entry name" value="Nucleotide-diphossugar_trans"/>
</dbReference>
<dbReference type="NCBIfam" id="TIGR00466">
    <property type="entry name" value="kdsB"/>
    <property type="match status" value="1"/>
</dbReference>
<dbReference type="NCBIfam" id="NF003950">
    <property type="entry name" value="PRK05450.1-3"/>
    <property type="match status" value="1"/>
</dbReference>
<dbReference type="NCBIfam" id="NF003952">
    <property type="entry name" value="PRK05450.1-5"/>
    <property type="match status" value="1"/>
</dbReference>
<dbReference type="NCBIfam" id="NF009905">
    <property type="entry name" value="PRK13368.1"/>
    <property type="match status" value="1"/>
</dbReference>
<dbReference type="PANTHER" id="PTHR42866">
    <property type="entry name" value="3-DEOXY-MANNO-OCTULOSONATE CYTIDYLYLTRANSFERASE"/>
    <property type="match status" value="1"/>
</dbReference>
<dbReference type="PANTHER" id="PTHR42866:SF2">
    <property type="entry name" value="3-DEOXY-MANNO-OCTULOSONATE CYTIDYLYLTRANSFERASE, MITOCHONDRIAL"/>
    <property type="match status" value="1"/>
</dbReference>
<dbReference type="Pfam" id="PF02348">
    <property type="entry name" value="CTP_transf_3"/>
    <property type="match status" value="1"/>
</dbReference>
<dbReference type="SUPFAM" id="SSF53448">
    <property type="entry name" value="Nucleotide-diphospho-sugar transferases"/>
    <property type="match status" value="1"/>
</dbReference>
<feature type="chain" id="PRO_1000091861" description="3-deoxy-manno-octulosonate cytidylyltransferase">
    <location>
        <begin position="1"/>
        <end position="254"/>
    </location>
</feature>
<reference key="1">
    <citation type="journal article" date="2003" name="Nat. Genet.">
        <title>Comparative analysis of the genome sequences of Bordetella pertussis, Bordetella parapertussis and Bordetella bronchiseptica.</title>
        <authorList>
            <person name="Parkhill J."/>
            <person name="Sebaihia M."/>
            <person name="Preston A."/>
            <person name="Murphy L.D."/>
            <person name="Thomson N.R."/>
            <person name="Harris D.E."/>
            <person name="Holden M.T.G."/>
            <person name="Churcher C.M."/>
            <person name="Bentley S.D."/>
            <person name="Mungall K.L."/>
            <person name="Cerdeno-Tarraga A.-M."/>
            <person name="Temple L."/>
            <person name="James K.D."/>
            <person name="Harris B."/>
            <person name="Quail M.A."/>
            <person name="Achtman M."/>
            <person name="Atkin R."/>
            <person name="Baker S."/>
            <person name="Basham D."/>
            <person name="Bason N."/>
            <person name="Cherevach I."/>
            <person name="Chillingworth T."/>
            <person name="Collins M."/>
            <person name="Cronin A."/>
            <person name="Davis P."/>
            <person name="Doggett J."/>
            <person name="Feltwell T."/>
            <person name="Goble A."/>
            <person name="Hamlin N."/>
            <person name="Hauser H."/>
            <person name="Holroyd S."/>
            <person name="Jagels K."/>
            <person name="Leather S."/>
            <person name="Moule S."/>
            <person name="Norberczak H."/>
            <person name="O'Neil S."/>
            <person name="Ormond D."/>
            <person name="Price C."/>
            <person name="Rabbinowitsch E."/>
            <person name="Rutter S."/>
            <person name="Sanders M."/>
            <person name="Saunders D."/>
            <person name="Seeger K."/>
            <person name="Sharp S."/>
            <person name="Simmonds M."/>
            <person name="Skelton J."/>
            <person name="Squares R."/>
            <person name="Squares S."/>
            <person name="Stevens K."/>
            <person name="Unwin L."/>
            <person name="Whitehead S."/>
            <person name="Barrell B.G."/>
            <person name="Maskell D.J."/>
        </authorList>
    </citation>
    <scope>NUCLEOTIDE SEQUENCE [LARGE SCALE GENOMIC DNA]</scope>
    <source>
        <strain>12822 / ATCC BAA-587 / NCTC 13253</strain>
    </source>
</reference>